<feature type="chain" id="PRO_1000070475" description="Enoyl-[acyl-carrier-protein] reductase [NADH]">
    <location>
        <begin position="1"/>
        <end position="400"/>
    </location>
</feature>
<feature type="active site" description="Proton donor" evidence="1">
    <location>
        <position position="235"/>
    </location>
</feature>
<feature type="binding site" evidence="1">
    <location>
        <begin position="48"/>
        <end position="53"/>
    </location>
    <ligand>
        <name>NAD(+)</name>
        <dbReference type="ChEBI" id="CHEBI:57540"/>
    </ligand>
</feature>
<feature type="binding site" evidence="1">
    <location>
        <begin position="74"/>
        <end position="75"/>
    </location>
    <ligand>
        <name>NAD(+)</name>
        <dbReference type="ChEBI" id="CHEBI:57540"/>
    </ligand>
</feature>
<feature type="binding site" evidence="1">
    <location>
        <begin position="111"/>
        <end position="112"/>
    </location>
    <ligand>
        <name>NAD(+)</name>
        <dbReference type="ChEBI" id="CHEBI:57540"/>
    </ligand>
</feature>
<feature type="binding site" evidence="1">
    <location>
        <begin position="139"/>
        <end position="140"/>
    </location>
    <ligand>
        <name>NAD(+)</name>
        <dbReference type="ChEBI" id="CHEBI:57540"/>
    </ligand>
</feature>
<feature type="binding site" evidence="1">
    <location>
        <position position="225"/>
    </location>
    <ligand>
        <name>substrate</name>
    </ligand>
</feature>
<feature type="binding site" evidence="1">
    <location>
        <position position="244"/>
    </location>
    <ligand>
        <name>NAD(+)</name>
        <dbReference type="ChEBI" id="CHEBI:57540"/>
    </ligand>
</feature>
<feature type="binding site" evidence="1">
    <location>
        <begin position="273"/>
        <end position="275"/>
    </location>
    <ligand>
        <name>NAD(+)</name>
        <dbReference type="ChEBI" id="CHEBI:57540"/>
    </ligand>
</feature>
<feature type="site" description="Plays an important role in discriminating NADH against NADPH" evidence="1">
    <location>
        <position position="75"/>
    </location>
</feature>
<organism>
    <name type="scientific">Burkholderia lata (strain ATCC 17760 / DSM 23089 / LMG 22485 / NCIMB 9086 / R18194 / 383)</name>
    <dbReference type="NCBI Taxonomy" id="482957"/>
    <lineage>
        <taxon>Bacteria</taxon>
        <taxon>Pseudomonadati</taxon>
        <taxon>Pseudomonadota</taxon>
        <taxon>Betaproteobacteria</taxon>
        <taxon>Burkholderiales</taxon>
        <taxon>Burkholderiaceae</taxon>
        <taxon>Burkholderia</taxon>
        <taxon>Burkholderia cepacia complex</taxon>
    </lineage>
</organism>
<accession>Q39B48</accession>
<dbReference type="EC" id="1.3.1.9" evidence="1"/>
<dbReference type="EMBL" id="CP000152">
    <property type="protein sequence ID" value="ABB10313.1"/>
    <property type="molecule type" value="Genomic_DNA"/>
</dbReference>
<dbReference type="RefSeq" id="WP_011353811.1">
    <property type="nucleotide sequence ID" value="NC_007511.1"/>
</dbReference>
<dbReference type="SMR" id="Q39B48"/>
<dbReference type="GeneID" id="45096585"/>
<dbReference type="KEGG" id="bur:Bcep18194_B0197"/>
<dbReference type="PATRIC" id="fig|482957.22.peg.3771"/>
<dbReference type="HOGENOM" id="CLU_057698_1_0_4"/>
<dbReference type="UniPathway" id="UPA00094"/>
<dbReference type="Proteomes" id="UP000002705">
    <property type="component" value="Chromosome 2"/>
</dbReference>
<dbReference type="GO" id="GO:0004318">
    <property type="term" value="F:enoyl-[acyl-carrier-protein] reductase (NADH) activity"/>
    <property type="evidence" value="ECO:0007669"/>
    <property type="project" value="UniProtKB-UniRule"/>
</dbReference>
<dbReference type="GO" id="GO:0051287">
    <property type="term" value="F:NAD binding"/>
    <property type="evidence" value="ECO:0007669"/>
    <property type="project" value="UniProtKB-UniRule"/>
</dbReference>
<dbReference type="GO" id="GO:0050343">
    <property type="term" value="F:trans-2-enoyl-CoA reductase (NADH) activity"/>
    <property type="evidence" value="ECO:0007669"/>
    <property type="project" value="TreeGrafter"/>
</dbReference>
<dbReference type="GO" id="GO:0006633">
    <property type="term" value="P:fatty acid biosynthetic process"/>
    <property type="evidence" value="ECO:0007669"/>
    <property type="project" value="UniProtKB-UniRule"/>
</dbReference>
<dbReference type="FunFam" id="3.40.50.720:FF:000221">
    <property type="entry name" value="Enoyl-[acyl-carrier-protein] reductase [NADH]"/>
    <property type="match status" value="1"/>
</dbReference>
<dbReference type="Gene3D" id="3.40.50.720">
    <property type="entry name" value="NAD(P)-binding Rossmann-like Domain"/>
    <property type="match status" value="1"/>
</dbReference>
<dbReference type="HAMAP" id="MF_01838">
    <property type="entry name" value="FabV_reductase"/>
    <property type="match status" value="1"/>
</dbReference>
<dbReference type="InterPro" id="IPR024906">
    <property type="entry name" value="Eno_Rdtase_FAD-bd_dom"/>
</dbReference>
<dbReference type="InterPro" id="IPR024910">
    <property type="entry name" value="Enoyl-CoA_Rdtase_cat_dom"/>
</dbReference>
<dbReference type="InterPro" id="IPR050048">
    <property type="entry name" value="FabV-like_NADH_b"/>
</dbReference>
<dbReference type="InterPro" id="IPR010758">
    <property type="entry name" value="Trans-2-enoyl-CoA_reductase"/>
</dbReference>
<dbReference type="NCBIfam" id="NF043048">
    <property type="entry name" value="EnoyACPredFabV"/>
    <property type="match status" value="1"/>
</dbReference>
<dbReference type="NCBIfam" id="NF010177">
    <property type="entry name" value="PRK13656.1"/>
    <property type="match status" value="1"/>
</dbReference>
<dbReference type="PANTHER" id="PTHR37480">
    <property type="entry name" value="ENOYL-[ACYL-CARRIER-PROTEIN] REDUCTASE [NADH]"/>
    <property type="match status" value="1"/>
</dbReference>
<dbReference type="PANTHER" id="PTHR37480:SF1">
    <property type="entry name" value="ENOYL-[ACYL-CARRIER-PROTEIN] REDUCTASE [NADH]"/>
    <property type="match status" value="1"/>
</dbReference>
<dbReference type="Pfam" id="PF07055">
    <property type="entry name" value="Eno-Rase_FAD_bd"/>
    <property type="match status" value="1"/>
</dbReference>
<dbReference type="Pfam" id="PF12242">
    <property type="entry name" value="Eno-Rase_NADH_b"/>
    <property type="match status" value="1"/>
</dbReference>
<dbReference type="Pfam" id="PF12241">
    <property type="entry name" value="Enoyl_reductase"/>
    <property type="match status" value="1"/>
</dbReference>
<sequence length="400" mass="43594">MIIKPRVRGFICVTTHPVGCEANVKEQIDYVTSHGPIANGPKKVLVIGASTGYGLAARISAAFGSDADTLGVFFERAGSETKPGTAGWYNSAAFEKFATEKGRYARSINGDAFSDHVKQVTIDTIKQDLGKVDLVVYSLAAPRRTHPKTGETISSTLKPIGKTVTFRGLDTDKEVLRDVTLEPATQEEIDGTVAVMGGEDWQMWIDALDEAGVLADGAKTTAFTYLGEQITHDIYWNGSIGEAKKDLDKKVLSIRDQLAAHGGDARVSVLKAVVTQASSAIPMMPLYLSLLFKTMKETGTHEGCIEQVYGLFKDSLYGATPHVDEEGRLRADYKELDPQVQAKVVAQWDHVTNDNLYELTDFTGYKTEFLRLFGFEIAGVDYDADVNPDVKIPGIIDTTV</sequence>
<comment type="function">
    <text evidence="1">Involved in the final reduction of the elongation cycle of fatty acid synthesis (FAS II). Catalyzes the reduction of a carbon-carbon double bond in an enoyl moiety that is covalently linked to an acyl carrier protein (ACP).</text>
</comment>
<comment type="catalytic activity">
    <reaction evidence="1">
        <text>a 2,3-saturated acyl-[ACP] + NAD(+) = a (2E)-enoyl-[ACP] + NADH + H(+)</text>
        <dbReference type="Rhea" id="RHEA:10240"/>
        <dbReference type="Rhea" id="RHEA-COMP:9925"/>
        <dbReference type="Rhea" id="RHEA-COMP:9926"/>
        <dbReference type="ChEBI" id="CHEBI:15378"/>
        <dbReference type="ChEBI" id="CHEBI:57540"/>
        <dbReference type="ChEBI" id="CHEBI:57945"/>
        <dbReference type="ChEBI" id="CHEBI:78784"/>
        <dbReference type="ChEBI" id="CHEBI:78785"/>
        <dbReference type="EC" id="1.3.1.9"/>
    </reaction>
</comment>
<comment type="pathway">
    <text evidence="1">Lipid metabolism; fatty acid biosynthesis.</text>
</comment>
<comment type="subunit">
    <text evidence="1">Monomer.</text>
</comment>
<comment type="similarity">
    <text evidence="1">Belongs to the TER reductase family.</text>
</comment>
<gene>
    <name evidence="1" type="primary">fabV</name>
    <name type="ordered locus">Bcep18194_B0197</name>
</gene>
<name>FABV_BURL3</name>
<reference key="1">
    <citation type="submission" date="2005-10" db="EMBL/GenBank/DDBJ databases">
        <title>Complete sequence of chromosome 2 of Burkholderia sp. 383.</title>
        <authorList>
            <consortium name="US DOE Joint Genome Institute"/>
            <person name="Copeland A."/>
            <person name="Lucas S."/>
            <person name="Lapidus A."/>
            <person name="Barry K."/>
            <person name="Detter J.C."/>
            <person name="Glavina T."/>
            <person name="Hammon N."/>
            <person name="Israni S."/>
            <person name="Pitluck S."/>
            <person name="Chain P."/>
            <person name="Malfatti S."/>
            <person name="Shin M."/>
            <person name="Vergez L."/>
            <person name="Schmutz J."/>
            <person name="Larimer F."/>
            <person name="Land M."/>
            <person name="Kyrpides N."/>
            <person name="Lykidis A."/>
            <person name="Richardson P."/>
        </authorList>
    </citation>
    <scope>NUCLEOTIDE SEQUENCE [LARGE SCALE GENOMIC DNA]</scope>
    <source>
        <strain>ATCC 17760 / DSM 23089 / LMG 22485 / NCIMB 9086 / R18194 / 383</strain>
    </source>
</reference>
<protein>
    <recommendedName>
        <fullName evidence="1">Enoyl-[acyl-carrier-protein] reductase [NADH]</fullName>
        <shortName evidence="1">ENR</shortName>
        <ecNumber evidence="1">1.3.1.9</ecNumber>
    </recommendedName>
</protein>
<proteinExistence type="inferred from homology"/>
<evidence type="ECO:0000255" key="1">
    <source>
        <dbReference type="HAMAP-Rule" id="MF_01838"/>
    </source>
</evidence>
<keyword id="KW-0275">Fatty acid biosynthesis</keyword>
<keyword id="KW-0276">Fatty acid metabolism</keyword>
<keyword id="KW-0444">Lipid biosynthesis</keyword>
<keyword id="KW-0443">Lipid metabolism</keyword>
<keyword id="KW-0520">NAD</keyword>
<keyword id="KW-0560">Oxidoreductase</keyword>